<keyword id="KW-0687">Ribonucleoprotein</keyword>
<keyword id="KW-0689">Ribosomal protein</keyword>
<keyword id="KW-0694">RNA-binding</keyword>
<keyword id="KW-0699">rRNA-binding</keyword>
<protein>
    <recommendedName>
        <fullName evidence="1">Large ribosomal subunit protein uL24</fullName>
    </recommendedName>
    <alternativeName>
        <fullName evidence="2">50S ribosomal protein L24</fullName>
    </alternativeName>
</protein>
<sequence>MAAKIRRDDEVIVLTGKDKGKRGKVKNVLSSGKVIVEGINLVKKHQKPVPALNQPGGIVEKEAAIQISNLAIFNAATGKADRVGFRFEDGKKVRFFKSNSETIK</sequence>
<organism>
    <name type="scientific">Klebsiella pneumoniae (strain 342)</name>
    <dbReference type="NCBI Taxonomy" id="507522"/>
    <lineage>
        <taxon>Bacteria</taxon>
        <taxon>Pseudomonadati</taxon>
        <taxon>Pseudomonadota</taxon>
        <taxon>Gammaproteobacteria</taxon>
        <taxon>Enterobacterales</taxon>
        <taxon>Enterobacteriaceae</taxon>
        <taxon>Klebsiella/Raoultella group</taxon>
        <taxon>Klebsiella</taxon>
        <taxon>Klebsiella pneumoniae complex</taxon>
    </lineage>
</organism>
<comment type="function">
    <text evidence="1">One of two assembly initiator proteins, it binds directly to the 5'-end of the 23S rRNA, where it nucleates assembly of the 50S subunit.</text>
</comment>
<comment type="function">
    <text evidence="1">One of the proteins that surrounds the polypeptide exit tunnel on the outside of the subunit.</text>
</comment>
<comment type="subunit">
    <text evidence="1">Part of the 50S ribosomal subunit.</text>
</comment>
<comment type="similarity">
    <text evidence="1">Belongs to the universal ribosomal protein uL24 family.</text>
</comment>
<dbReference type="EMBL" id="CP000964">
    <property type="protein sequence ID" value="ACI09410.1"/>
    <property type="molecule type" value="Genomic_DNA"/>
</dbReference>
<dbReference type="SMR" id="B5XNA4"/>
<dbReference type="KEGG" id="kpe:KPK_0409"/>
<dbReference type="HOGENOM" id="CLU_093315_2_2_6"/>
<dbReference type="Proteomes" id="UP000001734">
    <property type="component" value="Chromosome"/>
</dbReference>
<dbReference type="GO" id="GO:0005829">
    <property type="term" value="C:cytosol"/>
    <property type="evidence" value="ECO:0007669"/>
    <property type="project" value="UniProtKB-ARBA"/>
</dbReference>
<dbReference type="GO" id="GO:1990904">
    <property type="term" value="C:ribonucleoprotein complex"/>
    <property type="evidence" value="ECO:0007669"/>
    <property type="project" value="UniProtKB-KW"/>
</dbReference>
<dbReference type="GO" id="GO:0005840">
    <property type="term" value="C:ribosome"/>
    <property type="evidence" value="ECO:0007669"/>
    <property type="project" value="UniProtKB-KW"/>
</dbReference>
<dbReference type="GO" id="GO:0019843">
    <property type="term" value="F:rRNA binding"/>
    <property type="evidence" value="ECO:0007669"/>
    <property type="project" value="UniProtKB-UniRule"/>
</dbReference>
<dbReference type="GO" id="GO:0003735">
    <property type="term" value="F:structural constituent of ribosome"/>
    <property type="evidence" value="ECO:0007669"/>
    <property type="project" value="InterPro"/>
</dbReference>
<dbReference type="GO" id="GO:0006412">
    <property type="term" value="P:translation"/>
    <property type="evidence" value="ECO:0007669"/>
    <property type="project" value="UniProtKB-UniRule"/>
</dbReference>
<dbReference type="CDD" id="cd06089">
    <property type="entry name" value="KOW_RPL26"/>
    <property type="match status" value="1"/>
</dbReference>
<dbReference type="FunFam" id="2.30.30.30:FF:000004">
    <property type="entry name" value="50S ribosomal protein L24"/>
    <property type="match status" value="1"/>
</dbReference>
<dbReference type="Gene3D" id="2.30.30.30">
    <property type="match status" value="1"/>
</dbReference>
<dbReference type="HAMAP" id="MF_01326_B">
    <property type="entry name" value="Ribosomal_uL24_B"/>
    <property type="match status" value="1"/>
</dbReference>
<dbReference type="InterPro" id="IPR005824">
    <property type="entry name" value="KOW"/>
</dbReference>
<dbReference type="InterPro" id="IPR014722">
    <property type="entry name" value="Rib_uL2_dom2"/>
</dbReference>
<dbReference type="InterPro" id="IPR003256">
    <property type="entry name" value="Ribosomal_uL24"/>
</dbReference>
<dbReference type="InterPro" id="IPR005825">
    <property type="entry name" value="Ribosomal_uL24_CS"/>
</dbReference>
<dbReference type="InterPro" id="IPR041988">
    <property type="entry name" value="Ribosomal_uL24_KOW"/>
</dbReference>
<dbReference type="InterPro" id="IPR008991">
    <property type="entry name" value="Translation_prot_SH3-like_sf"/>
</dbReference>
<dbReference type="NCBIfam" id="TIGR01079">
    <property type="entry name" value="rplX_bact"/>
    <property type="match status" value="1"/>
</dbReference>
<dbReference type="PANTHER" id="PTHR12903">
    <property type="entry name" value="MITOCHONDRIAL RIBOSOMAL PROTEIN L24"/>
    <property type="match status" value="1"/>
</dbReference>
<dbReference type="Pfam" id="PF00467">
    <property type="entry name" value="KOW"/>
    <property type="match status" value="1"/>
</dbReference>
<dbReference type="Pfam" id="PF17136">
    <property type="entry name" value="ribosomal_L24"/>
    <property type="match status" value="1"/>
</dbReference>
<dbReference type="SMART" id="SM00739">
    <property type="entry name" value="KOW"/>
    <property type="match status" value="1"/>
</dbReference>
<dbReference type="SUPFAM" id="SSF50104">
    <property type="entry name" value="Translation proteins SH3-like domain"/>
    <property type="match status" value="1"/>
</dbReference>
<dbReference type="PROSITE" id="PS01108">
    <property type="entry name" value="RIBOSOMAL_L24"/>
    <property type="match status" value="1"/>
</dbReference>
<feature type="chain" id="PRO_1000142006" description="Large ribosomal subunit protein uL24">
    <location>
        <begin position="1"/>
        <end position="104"/>
    </location>
</feature>
<proteinExistence type="inferred from homology"/>
<accession>B5XNA4</accession>
<evidence type="ECO:0000255" key="1">
    <source>
        <dbReference type="HAMAP-Rule" id="MF_01326"/>
    </source>
</evidence>
<evidence type="ECO:0000305" key="2"/>
<reference key="1">
    <citation type="journal article" date="2008" name="PLoS Genet.">
        <title>Complete genome sequence of the N2-fixing broad host range endophyte Klebsiella pneumoniae 342 and virulence predictions verified in mice.</title>
        <authorList>
            <person name="Fouts D.E."/>
            <person name="Tyler H.L."/>
            <person name="DeBoy R.T."/>
            <person name="Daugherty S."/>
            <person name="Ren Q."/>
            <person name="Badger J.H."/>
            <person name="Durkin A.S."/>
            <person name="Huot H."/>
            <person name="Shrivastava S."/>
            <person name="Kothari S."/>
            <person name="Dodson R.J."/>
            <person name="Mohamoud Y."/>
            <person name="Khouri H."/>
            <person name="Roesch L.F.W."/>
            <person name="Krogfelt K.A."/>
            <person name="Struve C."/>
            <person name="Triplett E.W."/>
            <person name="Methe B.A."/>
        </authorList>
    </citation>
    <scope>NUCLEOTIDE SEQUENCE [LARGE SCALE GENOMIC DNA]</scope>
    <source>
        <strain>342</strain>
    </source>
</reference>
<name>RL24_KLEP3</name>
<gene>
    <name evidence="1" type="primary">rplX</name>
    <name type="ordered locus">KPK_0409</name>
</gene>